<keyword id="KW-0997">Cell inner membrane</keyword>
<keyword id="KW-1003">Cell membrane</keyword>
<keyword id="KW-0328">Glycosyltransferase</keyword>
<keyword id="KW-0441">Lipid A biosynthesis</keyword>
<keyword id="KW-0444">Lipid biosynthesis</keyword>
<keyword id="KW-0443">Lipid metabolism</keyword>
<keyword id="KW-0448">Lipopolysaccharide biosynthesis</keyword>
<keyword id="KW-0472">Membrane</keyword>
<keyword id="KW-0808">Transferase</keyword>
<keyword id="KW-0812">Transmembrane</keyword>
<keyword id="KW-1133">Transmembrane helix</keyword>
<feature type="chain" id="PRO_0000380027" description="Undecaprenyl phosphate-alpha-4-amino-4-deoxy-L-arabinose arabinosyl transferase">
    <location>
        <begin position="1"/>
        <end position="548"/>
    </location>
</feature>
<feature type="transmembrane region" description="Helical" evidence="1">
    <location>
        <begin position="9"/>
        <end position="29"/>
    </location>
</feature>
<feature type="transmembrane region" description="Helical" evidence="1">
    <location>
        <begin position="82"/>
        <end position="102"/>
    </location>
</feature>
<feature type="transmembrane region" description="Helical" evidence="1">
    <location>
        <begin position="114"/>
        <end position="134"/>
    </location>
</feature>
<feature type="transmembrane region" description="Helical" evidence="1">
    <location>
        <begin position="137"/>
        <end position="157"/>
    </location>
</feature>
<feature type="transmembrane region" description="Helical" evidence="1">
    <location>
        <begin position="163"/>
        <end position="185"/>
    </location>
</feature>
<feature type="transmembrane region" description="Helical" evidence="1">
    <location>
        <begin position="205"/>
        <end position="225"/>
    </location>
</feature>
<feature type="transmembrane region" description="Helical" evidence="1">
    <location>
        <begin position="256"/>
        <end position="276"/>
    </location>
</feature>
<feature type="transmembrane region" description="Helical" evidence="1">
    <location>
        <begin position="289"/>
        <end position="309"/>
    </location>
</feature>
<feature type="transmembrane region" description="Helical" evidence="1">
    <location>
        <begin position="311"/>
        <end position="331"/>
    </location>
</feature>
<feature type="transmembrane region" description="Helical" evidence="1">
    <location>
        <begin position="345"/>
        <end position="365"/>
    </location>
</feature>
<feature type="transmembrane region" description="Helical" evidence="1">
    <location>
        <begin position="381"/>
        <end position="401"/>
    </location>
</feature>
<feature type="transmembrane region" description="Helical" evidence="1">
    <location>
        <begin position="404"/>
        <end position="424"/>
    </location>
</feature>
<gene>
    <name evidence="1" type="primary">arnT</name>
    <name type="ordered locus">SEN2283</name>
</gene>
<evidence type="ECO:0000255" key="1">
    <source>
        <dbReference type="HAMAP-Rule" id="MF_01165"/>
    </source>
</evidence>
<name>ARNT_SALEP</name>
<comment type="function">
    <text evidence="1">Catalyzes the transfer of the L-Ara4N moiety of the glycolipid undecaprenyl phosphate-alpha-L-Ara4N to lipid A. The modified arabinose is attached to lipid A and is required for resistance to polymyxin and cationic antimicrobial peptides.</text>
</comment>
<comment type="catalytic activity">
    <reaction evidence="1">
        <text>4-amino-4-deoxy-alpha-L-arabinopyranosyl di-trans,octa-cis-undecaprenyl phosphate + lipid IVA = lipid IIA + di-trans,octa-cis-undecaprenyl phosphate.</text>
        <dbReference type="EC" id="2.4.2.43"/>
    </reaction>
</comment>
<comment type="pathway">
    <text evidence="1">Lipopolysaccharide metabolism; 4-amino-4-deoxy-beta-L-arabinose-lipid A biosynthesis.</text>
</comment>
<comment type="subcellular location">
    <subcellularLocation>
        <location evidence="1">Cell inner membrane</location>
        <topology evidence="1">Multi-pass membrane protein</topology>
    </subcellularLocation>
</comment>
<comment type="similarity">
    <text evidence="1">Belongs to the glycosyltransferase 83 family.</text>
</comment>
<reference key="1">
    <citation type="journal article" date="2008" name="Genome Res.">
        <title>Comparative genome analysis of Salmonella enteritidis PT4 and Salmonella gallinarum 287/91 provides insights into evolutionary and host adaptation pathways.</title>
        <authorList>
            <person name="Thomson N.R."/>
            <person name="Clayton D.J."/>
            <person name="Windhorst D."/>
            <person name="Vernikos G."/>
            <person name="Davidson S."/>
            <person name="Churcher C."/>
            <person name="Quail M.A."/>
            <person name="Stevens M."/>
            <person name="Jones M.A."/>
            <person name="Watson M."/>
            <person name="Barron A."/>
            <person name="Layton A."/>
            <person name="Pickard D."/>
            <person name="Kingsley R.A."/>
            <person name="Bignell A."/>
            <person name="Clark L."/>
            <person name="Harris B."/>
            <person name="Ormond D."/>
            <person name="Abdellah Z."/>
            <person name="Brooks K."/>
            <person name="Cherevach I."/>
            <person name="Chillingworth T."/>
            <person name="Woodward J."/>
            <person name="Norberczak H."/>
            <person name="Lord A."/>
            <person name="Arrowsmith C."/>
            <person name="Jagels K."/>
            <person name="Moule S."/>
            <person name="Mungall K."/>
            <person name="Saunders M."/>
            <person name="Whitehead S."/>
            <person name="Chabalgoity J.A."/>
            <person name="Maskell D."/>
            <person name="Humphreys T."/>
            <person name="Roberts M."/>
            <person name="Barrow P.A."/>
            <person name="Dougan G."/>
            <person name="Parkhill J."/>
        </authorList>
    </citation>
    <scope>NUCLEOTIDE SEQUENCE [LARGE SCALE GENOMIC DNA]</scope>
    <source>
        <strain>P125109</strain>
    </source>
</reference>
<protein>
    <recommendedName>
        <fullName evidence="1">Undecaprenyl phosphate-alpha-4-amino-4-deoxy-L-arabinose arabinosyl transferase</fullName>
        <ecNumber evidence="1">2.4.2.43</ecNumber>
    </recommendedName>
    <alternativeName>
        <fullName evidence="1">4-amino-4-deoxy-L-arabinose lipid A transferase</fullName>
    </alternativeName>
    <alternativeName>
        <fullName evidence="1">Lipid IV(A) 4-amino-4-deoxy-L-arabinosyltransferase</fullName>
    </alternativeName>
    <alternativeName>
        <fullName evidence="1">Undecaprenyl phosphate-alpha-L-Ara4N transferase</fullName>
    </alternativeName>
</protein>
<accession>B5R274</accession>
<dbReference type="EC" id="2.4.2.43" evidence="1"/>
<dbReference type="EMBL" id="AM933172">
    <property type="protein sequence ID" value="CAR33867.1"/>
    <property type="molecule type" value="Genomic_DNA"/>
</dbReference>
<dbReference type="RefSeq" id="WP_000978052.1">
    <property type="nucleotide sequence ID" value="NC_011294.1"/>
</dbReference>
<dbReference type="SMR" id="B5R274"/>
<dbReference type="CAZy" id="GT83">
    <property type="family name" value="Glycosyltransferase Family 83"/>
</dbReference>
<dbReference type="KEGG" id="set:SEN2283"/>
<dbReference type="HOGENOM" id="CLU_019200_2_1_6"/>
<dbReference type="UniPathway" id="UPA00037"/>
<dbReference type="Proteomes" id="UP000000613">
    <property type="component" value="Chromosome"/>
</dbReference>
<dbReference type="GO" id="GO:0005886">
    <property type="term" value="C:plasma membrane"/>
    <property type="evidence" value="ECO:0007669"/>
    <property type="project" value="UniProtKB-SubCell"/>
</dbReference>
<dbReference type="GO" id="GO:0103015">
    <property type="term" value="F:4-amino-4-deoxy-L-arabinose transferase activity"/>
    <property type="evidence" value="ECO:0007669"/>
    <property type="project" value="UniProtKB-EC"/>
</dbReference>
<dbReference type="GO" id="GO:0000030">
    <property type="term" value="F:mannosyltransferase activity"/>
    <property type="evidence" value="ECO:0007669"/>
    <property type="project" value="InterPro"/>
</dbReference>
<dbReference type="GO" id="GO:0009245">
    <property type="term" value="P:lipid A biosynthetic process"/>
    <property type="evidence" value="ECO:0007669"/>
    <property type="project" value="UniProtKB-UniRule"/>
</dbReference>
<dbReference type="GO" id="GO:0009103">
    <property type="term" value="P:lipopolysaccharide biosynthetic process"/>
    <property type="evidence" value="ECO:0007669"/>
    <property type="project" value="UniProtKB-KW"/>
</dbReference>
<dbReference type="GO" id="GO:0006493">
    <property type="term" value="P:protein O-linked glycosylation"/>
    <property type="evidence" value="ECO:0007669"/>
    <property type="project" value="InterPro"/>
</dbReference>
<dbReference type="GO" id="GO:0010041">
    <property type="term" value="P:response to iron(III) ion"/>
    <property type="evidence" value="ECO:0007669"/>
    <property type="project" value="TreeGrafter"/>
</dbReference>
<dbReference type="HAMAP" id="MF_01165">
    <property type="entry name" value="ArnT_transfer"/>
    <property type="match status" value="1"/>
</dbReference>
<dbReference type="InterPro" id="IPR022839">
    <property type="entry name" value="ArnT_tfrase"/>
</dbReference>
<dbReference type="InterPro" id="IPR003342">
    <property type="entry name" value="Glyco_trans_39/83"/>
</dbReference>
<dbReference type="InterPro" id="IPR050297">
    <property type="entry name" value="LipidA_mod_glycosyltrf_83"/>
</dbReference>
<dbReference type="NCBIfam" id="NF009784">
    <property type="entry name" value="PRK13279.1"/>
    <property type="match status" value="1"/>
</dbReference>
<dbReference type="PANTHER" id="PTHR33908">
    <property type="entry name" value="MANNOSYLTRANSFERASE YKCB-RELATED"/>
    <property type="match status" value="1"/>
</dbReference>
<dbReference type="PANTHER" id="PTHR33908:SF3">
    <property type="entry name" value="UNDECAPRENYL PHOSPHATE-ALPHA-4-AMINO-4-DEOXY-L-ARABINOSE ARABINOSYL TRANSFERASE"/>
    <property type="match status" value="1"/>
</dbReference>
<dbReference type="Pfam" id="PF02366">
    <property type="entry name" value="PMT"/>
    <property type="match status" value="1"/>
</dbReference>
<proteinExistence type="inferred from homology"/>
<sequence length="548" mass="61791">MMKSIRYYLAFAAFIALYYVIPVNSRLLWQPDETRYAEISREMLASGDWIVPHFLGLRYFEKPIAGYWINSLGQWLFGATNFGVRAGAILTTLLAAALVAWLTFRLWRDKRTALLASVIFLSLFAVYSIGTYAVLDPMIALWLTAGMCCFWQGMQATTRTGKIGMFLLLGATCGLGVLTKGFLALAVPVVSVLPWVIVQKRWKDFLLYGWLAVLSCFVVVLPWAIAIARREADFWHYFFWVEHIQRFAMSDAQHKAPFWYYLPVLLAGSLPWLGLLPGALKLGWRERNGAFYLLGWTIMPLLFFSIAKGKLPTYVLSCFAPIAILMARFVLHNVKEGVAALRVNGGINLVFGIIGIVAAFVVSSWGPLKSPVWTHIETYKVFCVWGVFTVWAFVGWYSLCHSQQYLLPAFCPLGLALLFGFSIPDRVMESKQPQFFVEMTQAPLASSRYILADNVGVAAGLAWSLKRDDIMLYGHAGELRYGLSYPDVQDKFVKADDFNAWLNQHRQEGIITLVLSIAKDEDISALSLPPADNVDYQGRLVLIQYRPK</sequence>
<organism>
    <name type="scientific">Salmonella enteritidis PT4 (strain P125109)</name>
    <dbReference type="NCBI Taxonomy" id="550537"/>
    <lineage>
        <taxon>Bacteria</taxon>
        <taxon>Pseudomonadati</taxon>
        <taxon>Pseudomonadota</taxon>
        <taxon>Gammaproteobacteria</taxon>
        <taxon>Enterobacterales</taxon>
        <taxon>Enterobacteriaceae</taxon>
        <taxon>Salmonella</taxon>
    </lineage>
</organism>